<comment type="function">
    <text>May be involved in metal transport.</text>
</comment>
<comment type="subcellular location">
    <subcellularLocation>
        <location evidence="2">Cell membrane</location>
        <topology evidence="2">Multi-pass membrane protein</topology>
    </subcellularLocation>
</comment>
<comment type="similarity">
    <text evidence="2">Belongs to the CbiM family.</text>
</comment>
<keyword id="KW-1003">Cell membrane</keyword>
<keyword id="KW-0472">Membrane</keyword>
<keyword id="KW-1185">Reference proteome</keyword>
<keyword id="KW-0812">Transmembrane</keyword>
<keyword id="KW-1133">Transmembrane helix</keyword>
<keyword id="KW-0813">Transport</keyword>
<dbReference type="EMBL" id="L42023">
    <property type="protein sequence ID" value="AAC23267.1"/>
    <property type="molecule type" value="Genomic_DNA"/>
</dbReference>
<dbReference type="PIR" id="E64038">
    <property type="entry name" value="E64038"/>
</dbReference>
<dbReference type="RefSeq" id="NP_439763.1">
    <property type="nucleotide sequence ID" value="NC_000907.1"/>
</dbReference>
<dbReference type="SMR" id="P44274"/>
<dbReference type="STRING" id="71421.HI_1621"/>
<dbReference type="EnsemblBacteria" id="AAC23267">
    <property type="protein sequence ID" value="AAC23267"/>
    <property type="gene ID" value="HI_1621"/>
</dbReference>
<dbReference type="KEGG" id="hin:HI_1621"/>
<dbReference type="PATRIC" id="fig|71421.8.peg.1696"/>
<dbReference type="eggNOG" id="COG0310">
    <property type="taxonomic scope" value="Bacteria"/>
</dbReference>
<dbReference type="HOGENOM" id="CLU_052508_1_0_6"/>
<dbReference type="OrthoDB" id="9792317at2"/>
<dbReference type="PhylomeDB" id="P44274"/>
<dbReference type="BioCyc" id="HINF71421:G1GJ1-1634-MONOMER"/>
<dbReference type="Proteomes" id="UP000000579">
    <property type="component" value="Chromosome"/>
</dbReference>
<dbReference type="GO" id="GO:0005886">
    <property type="term" value="C:plasma membrane"/>
    <property type="evidence" value="ECO:0007669"/>
    <property type="project" value="UniProtKB-SubCell"/>
</dbReference>
<dbReference type="GO" id="GO:0000041">
    <property type="term" value="P:transition metal ion transport"/>
    <property type="evidence" value="ECO:0007669"/>
    <property type="project" value="InterPro"/>
</dbReference>
<dbReference type="Gene3D" id="1.10.1760.20">
    <property type="match status" value="1"/>
</dbReference>
<dbReference type="InterPro" id="IPR002751">
    <property type="entry name" value="CbiM/NikMN"/>
</dbReference>
<dbReference type="NCBIfam" id="NF004904">
    <property type="entry name" value="PRK06265.1-4"/>
    <property type="match status" value="1"/>
</dbReference>
<dbReference type="NCBIfam" id="NF004905">
    <property type="entry name" value="PRK06265.1-5"/>
    <property type="match status" value="1"/>
</dbReference>
<dbReference type="PANTHER" id="PTHR34229">
    <property type="entry name" value="METAL TRANSPORT PROTEIN HI_1621-RELATED"/>
    <property type="match status" value="1"/>
</dbReference>
<dbReference type="PANTHER" id="PTHR34229:SF1">
    <property type="entry name" value="METAL TRANSPORT PROTEIN HI_1621-RELATED"/>
    <property type="match status" value="1"/>
</dbReference>
<dbReference type="Pfam" id="PF01891">
    <property type="entry name" value="CbiM"/>
    <property type="match status" value="1"/>
</dbReference>
<sequence length="206" mass="21704">MHLSEGVLHTPILLAGAVLAVAGIAVGLRRLESERLPLTALFAAAFFVAGTIHVPVGIGSVHLILNGMAGLFLGWAVFPAFLIALLLQVIFFSFGGFAVLGVNLCVMATPAVIAHYLFRSRLQPQMALKDRLLVGIGAGVIGVGGAGALASFVLMLDGGKSYLNLVWLLLVSHIPVFILDSIISVGVITLLGKMYPEVMNRTENFS</sequence>
<evidence type="ECO:0000255" key="1"/>
<evidence type="ECO:0000305" key="2"/>
<proteinExistence type="inferred from homology"/>
<organism>
    <name type="scientific">Haemophilus influenzae (strain ATCC 51907 / DSM 11121 / KW20 / Rd)</name>
    <dbReference type="NCBI Taxonomy" id="71421"/>
    <lineage>
        <taxon>Bacteria</taxon>
        <taxon>Pseudomonadati</taxon>
        <taxon>Pseudomonadota</taxon>
        <taxon>Gammaproteobacteria</taxon>
        <taxon>Pasteurellales</taxon>
        <taxon>Pasteurellaceae</taxon>
        <taxon>Haemophilus</taxon>
    </lineage>
</organism>
<name>Y1621_HAEIN</name>
<reference key="1">
    <citation type="journal article" date="1995" name="Science">
        <title>Whole-genome random sequencing and assembly of Haemophilus influenzae Rd.</title>
        <authorList>
            <person name="Fleischmann R.D."/>
            <person name="Adams M.D."/>
            <person name="White O."/>
            <person name="Clayton R.A."/>
            <person name="Kirkness E.F."/>
            <person name="Kerlavage A.R."/>
            <person name="Bult C.J."/>
            <person name="Tomb J.-F."/>
            <person name="Dougherty B.A."/>
            <person name="Merrick J.M."/>
            <person name="McKenney K."/>
            <person name="Sutton G.G."/>
            <person name="FitzHugh W."/>
            <person name="Fields C.A."/>
            <person name="Gocayne J.D."/>
            <person name="Scott J.D."/>
            <person name="Shirley R."/>
            <person name="Liu L.-I."/>
            <person name="Glodek A."/>
            <person name="Kelley J.M."/>
            <person name="Weidman J.F."/>
            <person name="Phillips C.A."/>
            <person name="Spriggs T."/>
            <person name="Hedblom E."/>
            <person name="Cotton M.D."/>
            <person name="Utterback T.R."/>
            <person name="Hanna M.C."/>
            <person name="Nguyen D.T."/>
            <person name="Saudek D.M."/>
            <person name="Brandon R.C."/>
            <person name="Fine L.D."/>
            <person name="Fritchman J.L."/>
            <person name="Fuhrmann J.L."/>
            <person name="Geoghagen N.S.M."/>
            <person name="Gnehm C.L."/>
            <person name="McDonald L.A."/>
            <person name="Small K.V."/>
            <person name="Fraser C.M."/>
            <person name="Smith H.O."/>
            <person name="Venter J.C."/>
        </authorList>
    </citation>
    <scope>NUCLEOTIDE SEQUENCE [LARGE SCALE GENOMIC DNA]</scope>
    <source>
        <strain>ATCC 51907 / DSM 11121 / KW20 / Rd</strain>
    </source>
</reference>
<feature type="chain" id="PRO_0000078100" description="Putative metal transport protein HI_1621">
    <location>
        <begin position="1"/>
        <end position="206"/>
    </location>
</feature>
<feature type="transmembrane region" description="Helical" evidence="1">
    <location>
        <begin position="6"/>
        <end position="26"/>
    </location>
</feature>
<feature type="transmembrane region" description="Helical" evidence="1">
    <location>
        <begin position="38"/>
        <end position="58"/>
    </location>
</feature>
<feature type="transmembrane region" description="Helical" evidence="1">
    <location>
        <begin position="72"/>
        <end position="92"/>
    </location>
</feature>
<feature type="transmembrane region" description="Helical" evidence="1">
    <location>
        <begin position="94"/>
        <end position="114"/>
    </location>
</feature>
<feature type="transmembrane region" description="Helical" evidence="1">
    <location>
        <begin position="136"/>
        <end position="156"/>
    </location>
</feature>
<feature type="transmembrane region" description="Helical" evidence="1">
    <location>
        <begin position="165"/>
        <end position="185"/>
    </location>
</feature>
<accession>P44274</accession>
<gene>
    <name type="ordered locus">HI_1621</name>
</gene>
<protein>
    <recommendedName>
        <fullName>Putative metal transport protein HI_1621</fullName>
    </recommendedName>
</protein>